<name>SPEE_CLOTE</name>
<accession>Q891W4</accession>
<proteinExistence type="inferred from homology"/>
<feature type="chain" id="PRO_0000156477" description="Polyamine aminopropyltransferase">
    <location>
        <begin position="1"/>
        <end position="281"/>
    </location>
</feature>
<feature type="domain" description="PABS" evidence="1">
    <location>
        <begin position="2"/>
        <end position="236"/>
    </location>
</feature>
<feature type="active site" description="Proton acceptor" evidence="1">
    <location>
        <position position="156"/>
    </location>
</feature>
<feature type="binding site" evidence="1">
    <location>
        <position position="31"/>
    </location>
    <ligand>
        <name>S-methyl-5'-thioadenosine</name>
        <dbReference type="ChEBI" id="CHEBI:17509"/>
    </ligand>
</feature>
<feature type="binding site" evidence="1">
    <location>
        <position position="62"/>
    </location>
    <ligand>
        <name>spermidine</name>
        <dbReference type="ChEBI" id="CHEBI:57834"/>
    </ligand>
</feature>
<feature type="binding site" evidence="1">
    <location>
        <position position="86"/>
    </location>
    <ligand>
        <name>spermidine</name>
        <dbReference type="ChEBI" id="CHEBI:57834"/>
    </ligand>
</feature>
<feature type="binding site" evidence="1">
    <location>
        <position position="106"/>
    </location>
    <ligand>
        <name>S-methyl-5'-thioadenosine</name>
        <dbReference type="ChEBI" id="CHEBI:17509"/>
    </ligand>
</feature>
<feature type="binding site" evidence="1">
    <location>
        <begin position="138"/>
        <end position="139"/>
    </location>
    <ligand>
        <name>S-methyl-5'-thioadenosine</name>
        <dbReference type="ChEBI" id="CHEBI:17509"/>
    </ligand>
</feature>
<feature type="binding site" evidence="1">
    <location>
        <begin position="156"/>
        <end position="159"/>
    </location>
    <ligand>
        <name>spermidine</name>
        <dbReference type="ChEBI" id="CHEBI:57834"/>
    </ligand>
</feature>
<protein>
    <recommendedName>
        <fullName evidence="1">Polyamine aminopropyltransferase</fullName>
    </recommendedName>
    <alternativeName>
        <fullName evidence="1">Putrescine aminopropyltransferase</fullName>
        <shortName evidence="1">PAPT</shortName>
    </alternativeName>
    <alternativeName>
        <fullName evidence="1">Spermidine synthase</fullName>
        <shortName evidence="1">SPDS</shortName>
        <shortName evidence="1">SPDSY</shortName>
        <ecNumber evidence="1">2.5.1.16</ecNumber>
    </alternativeName>
</protein>
<gene>
    <name evidence="1" type="primary">speE</name>
    <name type="ordered locus">CTC_02249</name>
</gene>
<sequence>MDLWLKEGQISDAVMTYKIKETLVRKKTEYQDLAIVDTYALGRMLVLDGIVQTSIKDEYVYHEMITHIPLYTHPNPKKVLVVGGGDGGTIREILKHPSVEKAVLCEIDEEVVKECKKHLPEISNNALEDSRCEVFIGDGIKYVNEHKNEFDVVIIDSTDPFGAAEGLFGGSFYGKISECLTEDGIFVAQTETPFYLPEIVKRVYDDSKAVFPVTKLFMAAIPTYPSGYWSFTIGSKKHDPEKAPVPEVLPFETKYYTPRLHSASFVLPKFVENLIFANISE</sequence>
<organism>
    <name type="scientific">Clostridium tetani (strain Massachusetts / E88)</name>
    <dbReference type="NCBI Taxonomy" id="212717"/>
    <lineage>
        <taxon>Bacteria</taxon>
        <taxon>Bacillati</taxon>
        <taxon>Bacillota</taxon>
        <taxon>Clostridia</taxon>
        <taxon>Eubacteriales</taxon>
        <taxon>Clostridiaceae</taxon>
        <taxon>Clostridium</taxon>
    </lineage>
</organism>
<keyword id="KW-0963">Cytoplasm</keyword>
<keyword id="KW-0620">Polyamine biosynthesis</keyword>
<keyword id="KW-1185">Reference proteome</keyword>
<keyword id="KW-0745">Spermidine biosynthesis</keyword>
<keyword id="KW-0808">Transferase</keyword>
<dbReference type="EC" id="2.5.1.16" evidence="1"/>
<dbReference type="EMBL" id="AE015927">
    <property type="protein sequence ID" value="AAO36731.1"/>
    <property type="molecule type" value="Genomic_DNA"/>
</dbReference>
<dbReference type="RefSeq" id="WP_011100392.1">
    <property type="nucleotide sequence ID" value="NC_004557.1"/>
</dbReference>
<dbReference type="SMR" id="Q891W4"/>
<dbReference type="STRING" id="212717.CTC_02249"/>
<dbReference type="GeneID" id="24255048"/>
<dbReference type="KEGG" id="ctc:CTC_02249"/>
<dbReference type="HOGENOM" id="CLU_048199_0_0_9"/>
<dbReference type="OrthoDB" id="9793120at2"/>
<dbReference type="UniPathway" id="UPA00248">
    <property type="reaction ID" value="UER00314"/>
</dbReference>
<dbReference type="Proteomes" id="UP000001412">
    <property type="component" value="Chromosome"/>
</dbReference>
<dbReference type="GO" id="GO:0005829">
    <property type="term" value="C:cytosol"/>
    <property type="evidence" value="ECO:0007669"/>
    <property type="project" value="TreeGrafter"/>
</dbReference>
<dbReference type="GO" id="GO:0004766">
    <property type="term" value="F:spermidine synthase activity"/>
    <property type="evidence" value="ECO:0007669"/>
    <property type="project" value="UniProtKB-UniRule"/>
</dbReference>
<dbReference type="GO" id="GO:0008295">
    <property type="term" value="P:spermidine biosynthetic process"/>
    <property type="evidence" value="ECO:0007669"/>
    <property type="project" value="UniProtKB-UniRule"/>
</dbReference>
<dbReference type="CDD" id="cd02440">
    <property type="entry name" value="AdoMet_MTases"/>
    <property type="match status" value="1"/>
</dbReference>
<dbReference type="Gene3D" id="2.30.140.10">
    <property type="entry name" value="Spermidine synthase, tetramerisation domain"/>
    <property type="match status" value="1"/>
</dbReference>
<dbReference type="Gene3D" id="3.40.50.150">
    <property type="entry name" value="Vaccinia Virus protein VP39"/>
    <property type="match status" value="1"/>
</dbReference>
<dbReference type="HAMAP" id="MF_00198">
    <property type="entry name" value="Spermidine_synth"/>
    <property type="match status" value="1"/>
</dbReference>
<dbReference type="InterPro" id="IPR030374">
    <property type="entry name" value="PABS"/>
</dbReference>
<dbReference type="InterPro" id="IPR030373">
    <property type="entry name" value="PABS_CS"/>
</dbReference>
<dbReference type="InterPro" id="IPR029063">
    <property type="entry name" value="SAM-dependent_MTases_sf"/>
</dbReference>
<dbReference type="InterPro" id="IPR001045">
    <property type="entry name" value="Spermi_synthase"/>
</dbReference>
<dbReference type="InterPro" id="IPR035246">
    <property type="entry name" value="Spermidine_synt_N"/>
</dbReference>
<dbReference type="InterPro" id="IPR037163">
    <property type="entry name" value="Spermidine_synt_N_sf"/>
</dbReference>
<dbReference type="NCBIfam" id="NF002010">
    <property type="entry name" value="PRK00811.1"/>
    <property type="match status" value="1"/>
</dbReference>
<dbReference type="NCBIfam" id="TIGR00417">
    <property type="entry name" value="speE"/>
    <property type="match status" value="1"/>
</dbReference>
<dbReference type="PANTHER" id="PTHR11558:SF11">
    <property type="entry name" value="SPERMIDINE SYNTHASE"/>
    <property type="match status" value="1"/>
</dbReference>
<dbReference type="PANTHER" id="PTHR11558">
    <property type="entry name" value="SPERMIDINE/SPERMINE SYNTHASE"/>
    <property type="match status" value="1"/>
</dbReference>
<dbReference type="Pfam" id="PF17284">
    <property type="entry name" value="Spermine_synt_N"/>
    <property type="match status" value="1"/>
</dbReference>
<dbReference type="Pfam" id="PF01564">
    <property type="entry name" value="Spermine_synth"/>
    <property type="match status" value="1"/>
</dbReference>
<dbReference type="SUPFAM" id="SSF53335">
    <property type="entry name" value="S-adenosyl-L-methionine-dependent methyltransferases"/>
    <property type="match status" value="1"/>
</dbReference>
<dbReference type="PROSITE" id="PS01330">
    <property type="entry name" value="PABS_1"/>
    <property type="match status" value="1"/>
</dbReference>
<dbReference type="PROSITE" id="PS51006">
    <property type="entry name" value="PABS_2"/>
    <property type="match status" value="1"/>
</dbReference>
<evidence type="ECO:0000255" key="1">
    <source>
        <dbReference type="HAMAP-Rule" id="MF_00198"/>
    </source>
</evidence>
<reference key="1">
    <citation type="journal article" date="2003" name="Proc. Natl. Acad. Sci. U.S.A.">
        <title>The genome sequence of Clostridium tetani, the causative agent of tetanus disease.</title>
        <authorList>
            <person name="Brueggemann H."/>
            <person name="Baeumer S."/>
            <person name="Fricke W.F."/>
            <person name="Wiezer A."/>
            <person name="Liesegang H."/>
            <person name="Decker I."/>
            <person name="Herzberg C."/>
            <person name="Martinez-Arias R."/>
            <person name="Merkl R."/>
            <person name="Henne A."/>
            <person name="Gottschalk G."/>
        </authorList>
    </citation>
    <scope>NUCLEOTIDE SEQUENCE [LARGE SCALE GENOMIC DNA]</scope>
    <source>
        <strain>Massachusetts / E88</strain>
    </source>
</reference>
<comment type="function">
    <text evidence="1">Catalyzes the irreversible transfer of a propylamine group from the amino donor S-adenosylmethioninamine (decarboxy-AdoMet) to putrescine (1,4-diaminobutane) to yield spermidine.</text>
</comment>
<comment type="catalytic activity">
    <reaction evidence="1">
        <text>S-adenosyl 3-(methylsulfanyl)propylamine + putrescine = S-methyl-5'-thioadenosine + spermidine + H(+)</text>
        <dbReference type="Rhea" id="RHEA:12721"/>
        <dbReference type="ChEBI" id="CHEBI:15378"/>
        <dbReference type="ChEBI" id="CHEBI:17509"/>
        <dbReference type="ChEBI" id="CHEBI:57443"/>
        <dbReference type="ChEBI" id="CHEBI:57834"/>
        <dbReference type="ChEBI" id="CHEBI:326268"/>
        <dbReference type="EC" id="2.5.1.16"/>
    </reaction>
</comment>
<comment type="pathway">
    <text evidence="1">Amine and polyamine biosynthesis; spermidine biosynthesis; spermidine from putrescine: step 1/1.</text>
</comment>
<comment type="subunit">
    <text evidence="1">Homodimer or homotetramer.</text>
</comment>
<comment type="subcellular location">
    <subcellularLocation>
        <location evidence="1">Cytoplasm</location>
    </subcellularLocation>
</comment>
<comment type="similarity">
    <text evidence="1">Belongs to the spermidine/spermine synthase family.</text>
</comment>